<sequence>MDIDQYMTDLGRRARHASRAMARASTAAKNAALDAVARAIERDAQALKDANARDVARAREKGLDAAFIDRLTLSDNALKTMVEGLRQVASLADPIGEIGNLKYRPSGIRVGQMRVPLGVIGIIYESRPNVTIDAAALCLKSGNATILRGGSEALESNAALAKLIGEGLEAAGLPQDAVQVVATADRAAVGKLITMTDYVDVIVPRGGKSLIERLINEARVPMIKHLDGICHVYVDDRADLAKALTVCDNAKTHRYGTCNTMETLLVASGIAATLLPPLGKLYRDKQVELRVDAAARAVLAEAGVGPLVDATDEDWHTEYLAPVLAIKVVDGLDAAIEHINHYGSHHTDAIVTEDHDRAMRFLREVDSASVMVNASTRFADGFEFGLGAEIGISNDKLHARGPVGLEGLTSLKYVVLGHGEGRQ</sequence>
<name>PROA_BURA4</name>
<organism>
    <name type="scientific">Burkholderia ambifaria (strain MC40-6)</name>
    <dbReference type="NCBI Taxonomy" id="398577"/>
    <lineage>
        <taxon>Bacteria</taxon>
        <taxon>Pseudomonadati</taxon>
        <taxon>Pseudomonadota</taxon>
        <taxon>Betaproteobacteria</taxon>
        <taxon>Burkholderiales</taxon>
        <taxon>Burkholderiaceae</taxon>
        <taxon>Burkholderia</taxon>
        <taxon>Burkholderia cepacia complex</taxon>
    </lineage>
</organism>
<keyword id="KW-0028">Amino-acid biosynthesis</keyword>
<keyword id="KW-0963">Cytoplasm</keyword>
<keyword id="KW-0521">NADP</keyword>
<keyword id="KW-0560">Oxidoreductase</keyword>
<keyword id="KW-0641">Proline biosynthesis</keyword>
<comment type="function">
    <text evidence="1">Catalyzes the NADPH-dependent reduction of L-glutamate 5-phosphate into L-glutamate 5-semialdehyde and phosphate. The product spontaneously undergoes cyclization to form 1-pyrroline-5-carboxylate.</text>
</comment>
<comment type="catalytic activity">
    <reaction evidence="1">
        <text>L-glutamate 5-semialdehyde + phosphate + NADP(+) = L-glutamyl 5-phosphate + NADPH + H(+)</text>
        <dbReference type="Rhea" id="RHEA:19541"/>
        <dbReference type="ChEBI" id="CHEBI:15378"/>
        <dbReference type="ChEBI" id="CHEBI:43474"/>
        <dbReference type="ChEBI" id="CHEBI:57783"/>
        <dbReference type="ChEBI" id="CHEBI:58066"/>
        <dbReference type="ChEBI" id="CHEBI:58274"/>
        <dbReference type="ChEBI" id="CHEBI:58349"/>
        <dbReference type="EC" id="1.2.1.41"/>
    </reaction>
</comment>
<comment type="pathway">
    <text evidence="1">Amino-acid biosynthesis; L-proline biosynthesis; L-glutamate 5-semialdehyde from L-glutamate: step 2/2.</text>
</comment>
<comment type="subcellular location">
    <subcellularLocation>
        <location evidence="1">Cytoplasm</location>
    </subcellularLocation>
</comment>
<comment type="similarity">
    <text evidence="1">Belongs to the gamma-glutamyl phosphate reductase family.</text>
</comment>
<evidence type="ECO:0000255" key="1">
    <source>
        <dbReference type="HAMAP-Rule" id="MF_00412"/>
    </source>
</evidence>
<proteinExistence type="inferred from homology"/>
<feature type="chain" id="PRO_1000193578" description="Gamma-glutamyl phosphate reductase">
    <location>
        <begin position="1"/>
        <end position="423"/>
    </location>
</feature>
<protein>
    <recommendedName>
        <fullName evidence="1">Gamma-glutamyl phosphate reductase</fullName>
        <shortName evidence="1">GPR</shortName>
        <ecNumber evidence="1">1.2.1.41</ecNumber>
    </recommendedName>
    <alternativeName>
        <fullName evidence="1">Glutamate-5-semialdehyde dehydrogenase</fullName>
    </alternativeName>
    <alternativeName>
        <fullName evidence="1">Glutamyl-gamma-semialdehyde dehydrogenase</fullName>
        <shortName evidence="1">GSA dehydrogenase</shortName>
    </alternativeName>
</protein>
<accession>B1YTB0</accession>
<reference key="1">
    <citation type="submission" date="2008-04" db="EMBL/GenBank/DDBJ databases">
        <title>Complete sequence of chromosome 1 of Burkholderia ambifaria MC40-6.</title>
        <authorList>
            <person name="Copeland A."/>
            <person name="Lucas S."/>
            <person name="Lapidus A."/>
            <person name="Glavina del Rio T."/>
            <person name="Dalin E."/>
            <person name="Tice H."/>
            <person name="Pitluck S."/>
            <person name="Chain P."/>
            <person name="Malfatti S."/>
            <person name="Shin M."/>
            <person name="Vergez L."/>
            <person name="Lang D."/>
            <person name="Schmutz J."/>
            <person name="Larimer F."/>
            <person name="Land M."/>
            <person name="Hauser L."/>
            <person name="Kyrpides N."/>
            <person name="Lykidis A."/>
            <person name="Ramette A."/>
            <person name="Konstantinidis K."/>
            <person name="Tiedje J."/>
            <person name="Richardson P."/>
        </authorList>
    </citation>
    <scope>NUCLEOTIDE SEQUENCE [LARGE SCALE GENOMIC DNA]</scope>
    <source>
        <strain>MC40-6</strain>
    </source>
</reference>
<gene>
    <name evidence="1" type="primary">proA</name>
    <name type="ordered locus">BamMC406_0578</name>
</gene>
<dbReference type="EC" id="1.2.1.41" evidence="1"/>
<dbReference type="EMBL" id="CP001025">
    <property type="protein sequence ID" value="ACB63075.1"/>
    <property type="molecule type" value="Genomic_DNA"/>
</dbReference>
<dbReference type="RefSeq" id="WP_012363085.1">
    <property type="nucleotide sequence ID" value="NC_010551.1"/>
</dbReference>
<dbReference type="SMR" id="B1YTB0"/>
<dbReference type="KEGG" id="bac:BamMC406_0578"/>
<dbReference type="HOGENOM" id="CLU_030231_0_0_4"/>
<dbReference type="OrthoDB" id="9809970at2"/>
<dbReference type="UniPathway" id="UPA00098">
    <property type="reaction ID" value="UER00360"/>
</dbReference>
<dbReference type="Proteomes" id="UP000001680">
    <property type="component" value="Chromosome 1"/>
</dbReference>
<dbReference type="GO" id="GO:0005737">
    <property type="term" value="C:cytoplasm"/>
    <property type="evidence" value="ECO:0007669"/>
    <property type="project" value="UniProtKB-SubCell"/>
</dbReference>
<dbReference type="GO" id="GO:0004350">
    <property type="term" value="F:glutamate-5-semialdehyde dehydrogenase activity"/>
    <property type="evidence" value="ECO:0007669"/>
    <property type="project" value="UniProtKB-UniRule"/>
</dbReference>
<dbReference type="GO" id="GO:0050661">
    <property type="term" value="F:NADP binding"/>
    <property type="evidence" value="ECO:0007669"/>
    <property type="project" value="InterPro"/>
</dbReference>
<dbReference type="GO" id="GO:0055129">
    <property type="term" value="P:L-proline biosynthetic process"/>
    <property type="evidence" value="ECO:0007669"/>
    <property type="project" value="UniProtKB-UniRule"/>
</dbReference>
<dbReference type="CDD" id="cd07079">
    <property type="entry name" value="ALDH_F18-19_ProA-GPR"/>
    <property type="match status" value="1"/>
</dbReference>
<dbReference type="FunFam" id="3.40.309.10:FF:000006">
    <property type="entry name" value="Gamma-glutamyl phosphate reductase"/>
    <property type="match status" value="1"/>
</dbReference>
<dbReference type="Gene3D" id="3.40.605.10">
    <property type="entry name" value="Aldehyde Dehydrogenase, Chain A, domain 1"/>
    <property type="match status" value="1"/>
</dbReference>
<dbReference type="Gene3D" id="3.40.309.10">
    <property type="entry name" value="Aldehyde Dehydrogenase, Chain A, domain 2"/>
    <property type="match status" value="1"/>
</dbReference>
<dbReference type="HAMAP" id="MF_00412">
    <property type="entry name" value="ProA"/>
    <property type="match status" value="1"/>
</dbReference>
<dbReference type="InterPro" id="IPR016161">
    <property type="entry name" value="Ald_DH/histidinol_DH"/>
</dbReference>
<dbReference type="InterPro" id="IPR016163">
    <property type="entry name" value="Ald_DH_C"/>
</dbReference>
<dbReference type="InterPro" id="IPR016162">
    <property type="entry name" value="Ald_DH_N"/>
</dbReference>
<dbReference type="InterPro" id="IPR015590">
    <property type="entry name" value="Aldehyde_DH_dom"/>
</dbReference>
<dbReference type="InterPro" id="IPR020593">
    <property type="entry name" value="G-glutamylP_reductase_CS"/>
</dbReference>
<dbReference type="InterPro" id="IPR012134">
    <property type="entry name" value="Glu-5-SA_DH"/>
</dbReference>
<dbReference type="InterPro" id="IPR000965">
    <property type="entry name" value="GPR_dom"/>
</dbReference>
<dbReference type="NCBIfam" id="NF001221">
    <property type="entry name" value="PRK00197.1"/>
    <property type="match status" value="1"/>
</dbReference>
<dbReference type="NCBIfam" id="TIGR00407">
    <property type="entry name" value="proA"/>
    <property type="match status" value="1"/>
</dbReference>
<dbReference type="PANTHER" id="PTHR11063:SF8">
    <property type="entry name" value="DELTA-1-PYRROLINE-5-CARBOXYLATE SYNTHASE"/>
    <property type="match status" value="1"/>
</dbReference>
<dbReference type="PANTHER" id="PTHR11063">
    <property type="entry name" value="GLUTAMATE SEMIALDEHYDE DEHYDROGENASE"/>
    <property type="match status" value="1"/>
</dbReference>
<dbReference type="Pfam" id="PF00171">
    <property type="entry name" value="Aldedh"/>
    <property type="match status" value="1"/>
</dbReference>
<dbReference type="PIRSF" id="PIRSF000151">
    <property type="entry name" value="GPR"/>
    <property type="match status" value="1"/>
</dbReference>
<dbReference type="SUPFAM" id="SSF53720">
    <property type="entry name" value="ALDH-like"/>
    <property type="match status" value="1"/>
</dbReference>
<dbReference type="PROSITE" id="PS01223">
    <property type="entry name" value="PROA"/>
    <property type="match status" value="1"/>
</dbReference>